<name>IDI_LEIXX</name>
<sequence>MTPPREEVVLLAEDGAPIGTADKATVHSESTPLHLAFSCHLFDGDGRILVTRRALGKATWPGVWTNSFCGHPALGESLEEAIARRAHEELGTSVDALALALALPDFRYRAVDATGVVEHEMCPVYTATIAWELRPSADEVAEWEWADPRALLSSVAATPWAFSPWLTLQLPALYAASGDQPSGQL</sequence>
<gene>
    <name evidence="1" type="primary">idi</name>
    <name type="ordered locus">Lxx23810</name>
</gene>
<organism>
    <name type="scientific">Leifsonia xyli subsp. xyli (strain CTCB07)</name>
    <dbReference type="NCBI Taxonomy" id="281090"/>
    <lineage>
        <taxon>Bacteria</taxon>
        <taxon>Bacillati</taxon>
        <taxon>Actinomycetota</taxon>
        <taxon>Actinomycetes</taxon>
        <taxon>Micrococcales</taxon>
        <taxon>Microbacteriaceae</taxon>
        <taxon>Leifsonia</taxon>
    </lineage>
</organism>
<proteinExistence type="inferred from homology"/>
<protein>
    <recommendedName>
        <fullName evidence="1">Isopentenyl-diphosphate Delta-isomerase</fullName>
        <shortName evidence="1">IPP isomerase</shortName>
        <ecNumber evidence="1">5.3.3.2</ecNumber>
    </recommendedName>
    <alternativeName>
        <fullName evidence="1">IPP:DMAPP isomerase</fullName>
    </alternativeName>
    <alternativeName>
        <fullName evidence="1">Isopentenyl pyrophosphate isomerase</fullName>
    </alternativeName>
</protein>
<feature type="chain" id="PRO_0000205252" description="Isopentenyl-diphosphate Delta-isomerase">
    <location>
        <begin position="1"/>
        <end position="185"/>
    </location>
</feature>
<feature type="domain" description="Nudix hydrolase">
    <location>
        <begin position="32"/>
        <end position="168"/>
    </location>
</feature>
<feature type="active site" evidence="1">
    <location>
        <position position="69"/>
    </location>
</feature>
<feature type="active site" evidence="1">
    <location>
        <position position="120"/>
    </location>
</feature>
<feature type="binding site" evidence="1">
    <location>
        <position position="27"/>
    </location>
    <ligand>
        <name>Mn(2+)</name>
        <dbReference type="ChEBI" id="CHEBI:29035"/>
    </ligand>
</feature>
<feature type="binding site" evidence="1">
    <location>
        <position position="34"/>
    </location>
    <ligand>
        <name>Mn(2+)</name>
        <dbReference type="ChEBI" id="CHEBI:29035"/>
    </ligand>
</feature>
<feature type="binding site" evidence="1">
    <location>
        <position position="69"/>
    </location>
    <ligand>
        <name>Mg(2+)</name>
        <dbReference type="ChEBI" id="CHEBI:18420"/>
    </ligand>
</feature>
<feature type="binding site" evidence="1">
    <location>
        <position position="71"/>
    </location>
    <ligand>
        <name>Mn(2+)</name>
        <dbReference type="ChEBI" id="CHEBI:29035"/>
    </ligand>
</feature>
<feature type="binding site" evidence="1">
    <location>
        <position position="89"/>
    </location>
    <ligand>
        <name>Mg(2+)</name>
        <dbReference type="ChEBI" id="CHEBI:18420"/>
    </ligand>
</feature>
<feature type="binding site" evidence="1">
    <location>
        <position position="118"/>
    </location>
    <ligand>
        <name>Mn(2+)</name>
        <dbReference type="ChEBI" id="CHEBI:29035"/>
    </ligand>
</feature>
<feature type="binding site" evidence="1">
    <location>
        <position position="120"/>
    </location>
    <ligand>
        <name>Mn(2+)</name>
        <dbReference type="ChEBI" id="CHEBI:29035"/>
    </ligand>
</feature>
<dbReference type="EC" id="5.3.3.2" evidence="1"/>
<dbReference type="EMBL" id="AE016822">
    <property type="protein sequence ID" value="AAT90019.1"/>
    <property type="molecule type" value="Genomic_DNA"/>
</dbReference>
<dbReference type="RefSeq" id="WP_011186998.1">
    <property type="nucleotide sequence ID" value="NC_006087.1"/>
</dbReference>
<dbReference type="SMR" id="Q6AC73"/>
<dbReference type="STRING" id="281090.Lxx23810"/>
<dbReference type="KEGG" id="lxx:Lxx23810"/>
<dbReference type="eggNOG" id="COG1443">
    <property type="taxonomic scope" value="Bacteria"/>
</dbReference>
<dbReference type="HOGENOM" id="CLU_060552_2_0_11"/>
<dbReference type="UniPathway" id="UPA00059">
    <property type="reaction ID" value="UER00104"/>
</dbReference>
<dbReference type="Proteomes" id="UP000001306">
    <property type="component" value="Chromosome"/>
</dbReference>
<dbReference type="GO" id="GO:0005737">
    <property type="term" value="C:cytoplasm"/>
    <property type="evidence" value="ECO:0007669"/>
    <property type="project" value="UniProtKB-SubCell"/>
</dbReference>
<dbReference type="GO" id="GO:0004452">
    <property type="term" value="F:isopentenyl-diphosphate delta-isomerase activity"/>
    <property type="evidence" value="ECO:0007669"/>
    <property type="project" value="UniProtKB-UniRule"/>
</dbReference>
<dbReference type="GO" id="GO:0046872">
    <property type="term" value="F:metal ion binding"/>
    <property type="evidence" value="ECO:0007669"/>
    <property type="project" value="UniProtKB-KW"/>
</dbReference>
<dbReference type="GO" id="GO:0050992">
    <property type="term" value="P:dimethylallyl diphosphate biosynthetic process"/>
    <property type="evidence" value="ECO:0007669"/>
    <property type="project" value="UniProtKB-UniRule"/>
</dbReference>
<dbReference type="GO" id="GO:0008299">
    <property type="term" value="P:isoprenoid biosynthetic process"/>
    <property type="evidence" value="ECO:0007669"/>
    <property type="project" value="UniProtKB-KW"/>
</dbReference>
<dbReference type="CDD" id="cd02885">
    <property type="entry name" value="NUDIX_IPP_Isomerase"/>
    <property type="match status" value="1"/>
</dbReference>
<dbReference type="FunFam" id="3.90.79.10:FF:000009">
    <property type="entry name" value="Isopentenyl-diphosphate Delta-isomerase"/>
    <property type="match status" value="1"/>
</dbReference>
<dbReference type="Gene3D" id="3.90.79.10">
    <property type="entry name" value="Nucleoside Triphosphate Pyrophosphohydrolase"/>
    <property type="match status" value="1"/>
</dbReference>
<dbReference type="HAMAP" id="MF_00202">
    <property type="entry name" value="Idi"/>
    <property type="match status" value="1"/>
</dbReference>
<dbReference type="InterPro" id="IPR056375">
    <property type="entry name" value="Idi_bact"/>
</dbReference>
<dbReference type="InterPro" id="IPR011876">
    <property type="entry name" value="IsopentenylPP_isomerase_typ1"/>
</dbReference>
<dbReference type="InterPro" id="IPR015797">
    <property type="entry name" value="NUDIX_hydrolase-like_dom_sf"/>
</dbReference>
<dbReference type="InterPro" id="IPR000086">
    <property type="entry name" value="NUDIX_hydrolase_dom"/>
</dbReference>
<dbReference type="NCBIfam" id="TIGR02150">
    <property type="entry name" value="IPP_isom_1"/>
    <property type="match status" value="1"/>
</dbReference>
<dbReference type="NCBIfam" id="NF002995">
    <property type="entry name" value="PRK03759.1"/>
    <property type="match status" value="1"/>
</dbReference>
<dbReference type="PANTHER" id="PTHR10885">
    <property type="entry name" value="ISOPENTENYL-DIPHOSPHATE DELTA-ISOMERASE"/>
    <property type="match status" value="1"/>
</dbReference>
<dbReference type="PANTHER" id="PTHR10885:SF0">
    <property type="entry name" value="ISOPENTENYL-DIPHOSPHATE DELTA-ISOMERASE"/>
    <property type="match status" value="1"/>
</dbReference>
<dbReference type="Pfam" id="PF00293">
    <property type="entry name" value="NUDIX"/>
    <property type="match status" value="1"/>
</dbReference>
<dbReference type="PIRSF" id="PIRSF018427">
    <property type="entry name" value="Isopntndiph_ism"/>
    <property type="match status" value="1"/>
</dbReference>
<dbReference type="SUPFAM" id="SSF55811">
    <property type="entry name" value="Nudix"/>
    <property type="match status" value="1"/>
</dbReference>
<dbReference type="PROSITE" id="PS51462">
    <property type="entry name" value="NUDIX"/>
    <property type="match status" value="1"/>
</dbReference>
<keyword id="KW-0963">Cytoplasm</keyword>
<keyword id="KW-0413">Isomerase</keyword>
<keyword id="KW-0414">Isoprene biosynthesis</keyword>
<keyword id="KW-0460">Magnesium</keyword>
<keyword id="KW-0464">Manganese</keyword>
<keyword id="KW-0479">Metal-binding</keyword>
<keyword id="KW-1185">Reference proteome</keyword>
<evidence type="ECO:0000255" key="1">
    <source>
        <dbReference type="HAMAP-Rule" id="MF_00202"/>
    </source>
</evidence>
<comment type="function">
    <text evidence="1">Catalyzes the 1,3-allylic rearrangement of the homoallylic substrate isopentenyl (IPP) to its highly electrophilic allylic isomer, dimethylallyl diphosphate (DMAPP).</text>
</comment>
<comment type="catalytic activity">
    <reaction evidence="1">
        <text>isopentenyl diphosphate = dimethylallyl diphosphate</text>
        <dbReference type="Rhea" id="RHEA:23284"/>
        <dbReference type="ChEBI" id="CHEBI:57623"/>
        <dbReference type="ChEBI" id="CHEBI:128769"/>
        <dbReference type="EC" id="5.3.3.2"/>
    </reaction>
</comment>
<comment type="cofactor">
    <cofactor evidence="1">
        <name>Mg(2+)</name>
        <dbReference type="ChEBI" id="CHEBI:18420"/>
    </cofactor>
    <text evidence="1">Binds 1 Mg(2+) ion per subunit. The magnesium ion binds only when substrate is bound.</text>
</comment>
<comment type="cofactor">
    <cofactor evidence="1">
        <name>Mn(2+)</name>
        <dbReference type="ChEBI" id="CHEBI:29035"/>
    </cofactor>
    <text evidence="1">Binds 1 Mn(2+) ion per subunit.</text>
</comment>
<comment type="pathway">
    <text evidence="1">Isoprenoid biosynthesis; dimethylallyl diphosphate biosynthesis; dimethylallyl diphosphate from isopentenyl diphosphate: step 1/1.</text>
</comment>
<comment type="subcellular location">
    <subcellularLocation>
        <location evidence="1">Cytoplasm</location>
    </subcellularLocation>
</comment>
<comment type="similarity">
    <text evidence="1">Belongs to the IPP isomerase type 1 family.</text>
</comment>
<accession>Q6AC73</accession>
<reference key="1">
    <citation type="journal article" date="2004" name="Mol. Plant Microbe Interact.">
        <title>The genome sequence of the Gram-positive sugarcane pathogen Leifsonia xyli subsp. xyli.</title>
        <authorList>
            <person name="Monteiro-Vitorello C.B."/>
            <person name="Camargo L.E.A."/>
            <person name="Van Sluys M.A."/>
            <person name="Kitajima J.P."/>
            <person name="Truffi D."/>
            <person name="do Amaral A.M."/>
            <person name="Harakava R."/>
            <person name="de Oliveira J.C.F."/>
            <person name="Wood D."/>
            <person name="de Oliveira M.C."/>
            <person name="Miyaki C.Y."/>
            <person name="Takita M.A."/>
            <person name="da Silva A.C.R."/>
            <person name="Furlan L.R."/>
            <person name="Carraro D.M."/>
            <person name="Camarotte G."/>
            <person name="Almeida N.F. Jr."/>
            <person name="Carrer H."/>
            <person name="Coutinho L.L."/>
            <person name="El-Dorry H.A."/>
            <person name="Ferro M.I.T."/>
            <person name="Gagliardi P.R."/>
            <person name="Giglioti E."/>
            <person name="Goldman M.H.S."/>
            <person name="Goldman G.H."/>
            <person name="Kimura E.T."/>
            <person name="Ferro E.S."/>
            <person name="Kuramae E.E."/>
            <person name="Lemos E.G.M."/>
            <person name="Lemos M.V.F."/>
            <person name="Mauro S.M.Z."/>
            <person name="Machado M.A."/>
            <person name="Marino C.L."/>
            <person name="Menck C.F."/>
            <person name="Nunes L.R."/>
            <person name="Oliveira R.C."/>
            <person name="Pereira G.G."/>
            <person name="Siqueira W."/>
            <person name="de Souza A.A."/>
            <person name="Tsai S.M."/>
            <person name="Zanca A.S."/>
            <person name="Simpson A.J.G."/>
            <person name="Brumbley S.M."/>
            <person name="Setubal J.C."/>
        </authorList>
    </citation>
    <scope>NUCLEOTIDE SEQUENCE [LARGE SCALE GENOMIC DNA]</scope>
    <source>
        <strain>CTCB07</strain>
    </source>
</reference>